<evidence type="ECO:0000255" key="1">
    <source>
        <dbReference type="HAMAP-Rule" id="MF_01495"/>
    </source>
</evidence>
<evidence type="ECO:0000269" key="2">
    <source>
    </source>
</evidence>
<evidence type="ECO:0000269" key="3">
    <source>
    </source>
</evidence>
<feature type="chain" id="PRO_0000077475" description="Photosystem II CP47 reaction center protein">
    <location>
        <begin position="1"/>
        <end position="508"/>
    </location>
</feature>
<feature type="transmembrane region" description="Helical" evidence="1">
    <location>
        <begin position="21"/>
        <end position="36"/>
    </location>
</feature>
<feature type="transmembrane region" description="Helical" evidence="1">
    <location>
        <begin position="101"/>
        <end position="115"/>
    </location>
</feature>
<feature type="transmembrane region" description="Helical" evidence="1">
    <location>
        <begin position="140"/>
        <end position="156"/>
    </location>
</feature>
<feature type="transmembrane region" description="Helical" evidence="1">
    <location>
        <begin position="203"/>
        <end position="218"/>
    </location>
</feature>
<feature type="transmembrane region" description="Helical" evidence="1">
    <location>
        <begin position="237"/>
        <end position="252"/>
    </location>
</feature>
<feature type="transmembrane region" description="Helical" evidence="1">
    <location>
        <begin position="457"/>
        <end position="472"/>
    </location>
</feature>
<proteinExistence type="evidence at transcript level"/>
<gene>
    <name evidence="1" type="primary">psbB</name>
</gene>
<accession>Q85AI7</accession>
<protein>
    <recommendedName>
        <fullName evidence="1">Photosystem II CP47 reaction center protein</fullName>
    </recommendedName>
    <alternativeName>
        <fullName evidence="1">PSII 47 kDa protein</fullName>
    </alternativeName>
    <alternativeName>
        <fullName evidence="1">Protein CP-47</fullName>
    </alternativeName>
</protein>
<geneLocation type="chloroplast"/>
<dbReference type="EMBL" id="AB086179">
    <property type="protein sequence ID" value="BAC55374.1"/>
    <property type="molecule type" value="Genomic_DNA"/>
</dbReference>
<dbReference type="EMBL" id="AB087462">
    <property type="protein sequence ID" value="BAC55471.1"/>
    <property type="molecule type" value="mRNA"/>
</dbReference>
<dbReference type="RefSeq" id="NP_777438.1">
    <property type="nucleotide sequence ID" value="NC_004543.1"/>
</dbReference>
<dbReference type="SMR" id="Q85AI7"/>
<dbReference type="GeneID" id="2553397"/>
<dbReference type="GO" id="GO:0009535">
    <property type="term" value="C:chloroplast thylakoid membrane"/>
    <property type="evidence" value="ECO:0007669"/>
    <property type="project" value="UniProtKB-SubCell"/>
</dbReference>
<dbReference type="GO" id="GO:0009523">
    <property type="term" value="C:photosystem II"/>
    <property type="evidence" value="ECO:0007669"/>
    <property type="project" value="UniProtKB-KW"/>
</dbReference>
<dbReference type="GO" id="GO:0016168">
    <property type="term" value="F:chlorophyll binding"/>
    <property type="evidence" value="ECO:0007669"/>
    <property type="project" value="UniProtKB-UniRule"/>
</dbReference>
<dbReference type="GO" id="GO:0045156">
    <property type="term" value="F:electron transporter, transferring electrons within the cyclic electron transport pathway of photosynthesis activity"/>
    <property type="evidence" value="ECO:0007669"/>
    <property type="project" value="InterPro"/>
</dbReference>
<dbReference type="GO" id="GO:0009772">
    <property type="term" value="P:photosynthetic electron transport in photosystem II"/>
    <property type="evidence" value="ECO:0007669"/>
    <property type="project" value="InterPro"/>
</dbReference>
<dbReference type="FunFam" id="3.10.680.10:FF:000001">
    <property type="entry name" value="Photosystem II CP47 reaction center protein"/>
    <property type="match status" value="1"/>
</dbReference>
<dbReference type="Gene3D" id="3.10.680.10">
    <property type="entry name" value="Photosystem II CP47 reaction center protein"/>
    <property type="match status" value="1"/>
</dbReference>
<dbReference type="HAMAP" id="MF_01495">
    <property type="entry name" value="PSII_PsbB_CP47"/>
    <property type="match status" value="1"/>
</dbReference>
<dbReference type="InterPro" id="IPR000932">
    <property type="entry name" value="PS_antenna-like"/>
</dbReference>
<dbReference type="InterPro" id="IPR036001">
    <property type="entry name" value="PS_II_antenna-like_sf"/>
</dbReference>
<dbReference type="InterPro" id="IPR017486">
    <property type="entry name" value="PSII_PsbB"/>
</dbReference>
<dbReference type="NCBIfam" id="TIGR03039">
    <property type="entry name" value="PS_II_CP47"/>
    <property type="match status" value="1"/>
</dbReference>
<dbReference type="PANTHER" id="PTHR33180">
    <property type="entry name" value="PHOTOSYSTEM II CP43 REACTION CENTER PROTEIN"/>
    <property type="match status" value="1"/>
</dbReference>
<dbReference type="PANTHER" id="PTHR33180:SF37">
    <property type="entry name" value="PHOTOSYSTEM II CP43 REACTION CENTER PROTEIN"/>
    <property type="match status" value="1"/>
</dbReference>
<dbReference type="Pfam" id="PF00421">
    <property type="entry name" value="PSII"/>
    <property type="match status" value="1"/>
</dbReference>
<dbReference type="SUPFAM" id="SSF161077">
    <property type="entry name" value="Photosystem II antenna protein-like"/>
    <property type="match status" value="1"/>
</dbReference>
<organism>
    <name type="scientific">Anthoceros angustus</name>
    <name type="common">Hornwort</name>
    <name type="synonym">Anthoceros formosae</name>
    <dbReference type="NCBI Taxonomy" id="48387"/>
    <lineage>
        <taxon>Eukaryota</taxon>
        <taxon>Viridiplantae</taxon>
        <taxon>Streptophyta</taxon>
        <taxon>Embryophyta</taxon>
        <taxon>Anthocerotophyta</taxon>
        <taxon>Anthocerotopsida</taxon>
        <taxon>Anthocerotidae</taxon>
        <taxon>Anthocerotales</taxon>
        <taxon>Anthocerotaceae</taxon>
        <taxon>Anthoceros</taxon>
    </lineage>
</organism>
<name>PSBB_ANTAG</name>
<comment type="function">
    <text evidence="1">One of the components of the core complex of photosystem II (PSII). It binds chlorophyll and helps catalyze the primary light-induced photochemical processes of PSII. PSII is a light-driven water:plastoquinone oxidoreductase, using light energy to abstract electrons from H(2)O, generating O(2) and a proton gradient subsequently used for ATP formation.</text>
</comment>
<comment type="cofactor">
    <text evidence="1">Binds multiple chlorophylls. PSII binds additional chlorophylls, carotenoids and specific lipids.</text>
</comment>
<comment type="subunit">
    <text evidence="1">PSII is composed of 1 copy each of membrane proteins PsbA, PsbB, PsbC, PsbD, PsbE, PsbF, PsbH, PsbI, PsbJ, PsbK, PsbL, PsbM, PsbT, PsbX, PsbY, PsbZ, Psb30/Ycf12, at least 3 peripheral proteins of the oxygen-evolving complex and a large number of cofactors. It forms dimeric complexes.</text>
</comment>
<comment type="subcellular location">
    <subcellularLocation>
        <location evidence="1">Plastid</location>
        <location evidence="1">Chloroplast thylakoid membrane</location>
        <topology evidence="1">Multi-pass membrane protein</topology>
    </subcellularLocation>
</comment>
<comment type="RNA editing">
    <location>
        <position position="5" evidence="2 3"/>
    </location>
    <location>
        <position position="13" evidence="2 3"/>
    </location>
    <location>
        <position position="16" evidence="2 3"/>
    </location>
    <location>
        <position position="18" evidence="2 3"/>
    </location>
    <location>
        <position position="21" evidence="2 3"/>
    </location>
    <location>
        <position position="54" evidence="2 3"/>
    </location>
    <location>
        <position position="64" evidence="2 3"/>
    </location>
    <location>
        <position position="100" evidence="2 3"/>
    </location>
    <location>
        <position position="103" evidence="2 3"/>
    </location>
    <location>
        <position position="104" evidence="2 3"/>
    </location>
    <location>
        <position position="107" evidence="2 3"/>
    </location>
    <location>
        <position position="120" evidence="2 3"/>
    </location>
    <location>
        <position position="122" evidence="2 3"/>
    </location>
    <location>
        <position position="132" evidence="2 3"/>
    </location>
    <location>
        <position position="133" evidence="2 3"/>
    </location>
    <location>
        <position position="135" evidence="2 3"/>
    </location>
    <location>
        <position position="156" evidence="2 3"/>
    </location>
    <location>
        <position position="216" evidence="2 3"/>
    </location>
    <location>
        <position position="222" evidence="2 3"/>
    </location>
    <location>
        <position position="264" evidence="2 3"/>
    </location>
    <location>
        <position position="267" evidence="2 3"/>
    </location>
    <location>
        <position position="268" evidence="2 3"/>
    </location>
    <location>
        <position position="277" evidence="2 3"/>
    </location>
    <location>
        <position position="319" evidence="2 3"/>
    </location>
    <location>
        <position position="343" evidence="2 3"/>
    </location>
    <location>
        <position position="363" evidence="2 3"/>
    </location>
    <location>
        <position position="370" evidence="2 3"/>
    </location>
    <location>
        <position position="382" evidence="2 3"/>
    </location>
    <location>
        <position position="383" evidence="2 3"/>
    </location>
    <location>
        <position position="423" evidence="2 3"/>
    </location>
    <location>
        <position position="425" evidence="2 3"/>
    </location>
    <location>
        <position position="430" evidence="2 3"/>
    </location>
    <location>
        <position position="432" evidence="2 3"/>
    </location>
    <location>
        <position position="443" evidence="2 3"/>
    </location>
    <location>
        <position position="462" evidence="2 3"/>
    </location>
    <location>
        <position position="463" evidence="2 3"/>
    </location>
    <text>The nonsense codons at positions 277 and 425 are modified to sense codons.</text>
</comment>
<comment type="similarity">
    <text evidence="1">Belongs to the PsbB/PsbC family. PsbB subfamily.</text>
</comment>
<keyword id="KW-0148">Chlorophyll</keyword>
<keyword id="KW-0150">Chloroplast</keyword>
<keyword id="KW-0157">Chromophore</keyword>
<keyword id="KW-0472">Membrane</keyword>
<keyword id="KW-0602">Photosynthesis</keyword>
<keyword id="KW-0604">Photosystem II</keyword>
<keyword id="KW-0934">Plastid</keyword>
<keyword id="KW-0691">RNA editing</keyword>
<keyword id="KW-0793">Thylakoid</keyword>
<keyword id="KW-0812">Transmembrane</keyword>
<keyword id="KW-1133">Transmembrane helix</keyword>
<sequence length="508" mass="56253">MGLPWYRVHTVVLNDPGRLIAVHLMHTALVSGWAGSMALYELAVFDPSDPVLDPMWRQGMFVIPFMTRLGITKSWGGWSITGETVTNAGIWSYEGVAAVHIVLSGLLFLAAIWHWVYWDLELFRDERTGKPSLDLPKIFGIHLFLSGVLCFGFGAFHVTGLFGPGIWVSDPYGLTGKVEPVAPAWGAEGFDPFVPGGIASHHIAAGILGILAGLFHLSVRPPQRLYKGLRMGNVETVLSSSIAAVFFAAFVVAGTMWYGSAATPIELFGPTRYQWDQGFFQQEIDRRIRSSKAENLSLSEAWSKIPEKLAFYDYIGNNPAKGGLFRAGAMDNGDGIAVGWLGHAVFKDKEGHELFVRRMPTFFETFPVVLVDEEGIVRADIPFRRAESKYSVEQVGVIVEFYGGELDGVSFSDPVTVKKYARRAQLGEIFEFDRATLKSDGVFRSSPRGWFTFGHATFALLFFFGHIWHGARTLFRDVFAGIDSDLDAQVEFGAFEKLGDPTTKRQVV</sequence>
<reference key="1">
    <citation type="journal article" date="2003" name="Nucleic Acids Res.">
        <title>The complete nucleotide sequence of the hornwort (Anthoceros formosae) chloroplast genome: insight into the earliest land plants.</title>
        <authorList>
            <person name="Kugita M."/>
            <person name="Kaneko A."/>
            <person name="Yamamoto Y."/>
            <person name="Takeya Y."/>
            <person name="Matsumoto T."/>
            <person name="Yoshinaga K."/>
        </authorList>
    </citation>
    <scope>NUCLEOTIDE SEQUENCE [LARGE SCALE GENOMIC DNA]</scope>
    <scope>RNA EDITING</scope>
</reference>
<reference key="2">
    <citation type="journal article" date="2003" name="Nucleic Acids Res.">
        <title>RNA editing in hornwort chloroplasts makes more than half the genes functional.</title>
        <authorList>
            <person name="Kugita M."/>
            <person name="Yamamoto Y."/>
            <person name="Fujikawa T."/>
            <person name="Matsumoto T."/>
            <person name="Yoshinaga K."/>
        </authorList>
    </citation>
    <scope>NUCLEOTIDE SEQUENCE [MRNA]</scope>
    <scope>RNA EDITING</scope>
    <source>
        <tissue>Thallus</tissue>
    </source>
</reference>